<comment type="function">
    <text evidence="1">Forms part of the ribosomal stalk which helps the ribosome interact with GTP-bound translation factors.</text>
</comment>
<comment type="subunit">
    <text evidence="1">Part of the ribosomal stalk of the 50S ribosomal subunit. Interacts with L10 and the large rRNA to form the base of the stalk. L10 forms an elongated spine to which L12 dimers bind in a sequential fashion forming a multimeric L10(L12)X complex.</text>
</comment>
<comment type="PTM">
    <text evidence="1">One or more lysine residues are methylated.</text>
</comment>
<comment type="similarity">
    <text evidence="1">Belongs to the universal ribosomal protein uL11 family.</text>
</comment>
<gene>
    <name evidence="1" type="primary">rplK</name>
    <name type="ordered locus">BR1248</name>
    <name type="ordered locus">BS1330_I1244</name>
</gene>
<feature type="chain" id="PRO_0000104258" description="Large ribosomal subunit protein uL11">
    <location>
        <begin position="1"/>
        <end position="142"/>
    </location>
</feature>
<evidence type="ECO:0000255" key="1">
    <source>
        <dbReference type="HAMAP-Rule" id="MF_00736"/>
    </source>
</evidence>
<evidence type="ECO:0000305" key="2"/>
<reference key="1">
    <citation type="journal article" date="2002" name="Proc. Natl. Acad. Sci. U.S.A.">
        <title>The Brucella suis genome reveals fundamental similarities between animal and plant pathogens and symbionts.</title>
        <authorList>
            <person name="Paulsen I.T."/>
            <person name="Seshadri R."/>
            <person name="Nelson K.E."/>
            <person name="Eisen J.A."/>
            <person name="Heidelberg J.F."/>
            <person name="Read T.D."/>
            <person name="Dodson R.J."/>
            <person name="Umayam L.A."/>
            <person name="Brinkac L.M."/>
            <person name="Beanan M.J."/>
            <person name="Daugherty S.C."/>
            <person name="DeBoy R.T."/>
            <person name="Durkin A.S."/>
            <person name="Kolonay J.F."/>
            <person name="Madupu R."/>
            <person name="Nelson W.C."/>
            <person name="Ayodeji B."/>
            <person name="Kraul M."/>
            <person name="Shetty J."/>
            <person name="Malek J.A."/>
            <person name="Van Aken S.E."/>
            <person name="Riedmuller S."/>
            <person name="Tettelin H."/>
            <person name="Gill S.R."/>
            <person name="White O."/>
            <person name="Salzberg S.L."/>
            <person name="Hoover D.L."/>
            <person name="Lindler L.E."/>
            <person name="Halling S.M."/>
            <person name="Boyle S.M."/>
            <person name="Fraser C.M."/>
        </authorList>
    </citation>
    <scope>NUCLEOTIDE SEQUENCE [LARGE SCALE GENOMIC DNA]</scope>
    <source>
        <strain>1330</strain>
    </source>
</reference>
<reference key="2">
    <citation type="journal article" date="2011" name="J. Bacteriol.">
        <title>Revised genome sequence of Brucella suis 1330.</title>
        <authorList>
            <person name="Tae H."/>
            <person name="Shallom S."/>
            <person name="Settlage R."/>
            <person name="Preston D."/>
            <person name="Adams L.G."/>
            <person name="Garner H.R."/>
        </authorList>
    </citation>
    <scope>NUCLEOTIDE SEQUENCE [LARGE SCALE GENOMIC DNA]</scope>
    <source>
        <strain>1330</strain>
    </source>
</reference>
<keyword id="KW-0488">Methylation</keyword>
<keyword id="KW-0687">Ribonucleoprotein</keyword>
<keyword id="KW-0689">Ribosomal protein</keyword>
<keyword id="KW-0694">RNA-binding</keyword>
<keyword id="KW-0699">rRNA-binding</keyword>
<proteinExistence type="inferred from homology"/>
<protein>
    <recommendedName>
        <fullName evidence="1">Large ribosomal subunit protein uL11</fullName>
    </recommendedName>
    <alternativeName>
        <fullName evidence="2">50S ribosomal protein L11</fullName>
    </alternativeName>
</protein>
<accession>Q8G065</accession>
<accession>G0KAG9</accession>
<sequence>MAKKVAGQLKLQVPAGAANPSPPIGPALGQRGINIMEFCKAFNAASQEMEKGSPIPVLITYYQDKSFTFVMKTPPVTYFLKKAANLKSGSKTPGKASAGTITRDKVRAIAEAKMKDLNAADVEAAMRMIEGSARSMGLEVVG</sequence>
<organism>
    <name type="scientific">Brucella suis biovar 1 (strain 1330)</name>
    <dbReference type="NCBI Taxonomy" id="204722"/>
    <lineage>
        <taxon>Bacteria</taxon>
        <taxon>Pseudomonadati</taxon>
        <taxon>Pseudomonadota</taxon>
        <taxon>Alphaproteobacteria</taxon>
        <taxon>Hyphomicrobiales</taxon>
        <taxon>Brucellaceae</taxon>
        <taxon>Brucella/Ochrobactrum group</taxon>
        <taxon>Brucella</taxon>
    </lineage>
</organism>
<name>RL11_BRUSU</name>
<dbReference type="EMBL" id="AE014291">
    <property type="protein sequence ID" value="AAN30167.1"/>
    <property type="molecule type" value="Genomic_DNA"/>
</dbReference>
<dbReference type="EMBL" id="CP002997">
    <property type="protein sequence ID" value="AEM18585.1"/>
    <property type="molecule type" value="Genomic_DNA"/>
</dbReference>
<dbReference type="PIR" id="AC3345">
    <property type="entry name" value="AC3345"/>
</dbReference>
<dbReference type="RefSeq" id="WP_002964374.1">
    <property type="nucleotide sequence ID" value="NZ_KN046804.1"/>
</dbReference>
<dbReference type="SMR" id="Q8G065"/>
<dbReference type="GeneID" id="97533513"/>
<dbReference type="KEGG" id="bms:BR1248"/>
<dbReference type="KEGG" id="bsi:BS1330_I1244"/>
<dbReference type="PATRIC" id="fig|204722.21.peg.3404"/>
<dbReference type="HOGENOM" id="CLU_074237_2_0_5"/>
<dbReference type="PhylomeDB" id="Q8G065"/>
<dbReference type="Proteomes" id="UP000007104">
    <property type="component" value="Chromosome I"/>
</dbReference>
<dbReference type="GO" id="GO:0022625">
    <property type="term" value="C:cytosolic large ribosomal subunit"/>
    <property type="evidence" value="ECO:0007669"/>
    <property type="project" value="TreeGrafter"/>
</dbReference>
<dbReference type="GO" id="GO:0070180">
    <property type="term" value="F:large ribosomal subunit rRNA binding"/>
    <property type="evidence" value="ECO:0007669"/>
    <property type="project" value="UniProtKB-UniRule"/>
</dbReference>
<dbReference type="GO" id="GO:0003735">
    <property type="term" value="F:structural constituent of ribosome"/>
    <property type="evidence" value="ECO:0007669"/>
    <property type="project" value="InterPro"/>
</dbReference>
<dbReference type="GO" id="GO:0006412">
    <property type="term" value="P:translation"/>
    <property type="evidence" value="ECO:0007669"/>
    <property type="project" value="UniProtKB-UniRule"/>
</dbReference>
<dbReference type="CDD" id="cd00349">
    <property type="entry name" value="Ribosomal_L11"/>
    <property type="match status" value="1"/>
</dbReference>
<dbReference type="FunFam" id="1.10.10.250:FF:000001">
    <property type="entry name" value="50S ribosomal protein L11"/>
    <property type="match status" value="1"/>
</dbReference>
<dbReference type="FunFam" id="3.30.1550.10:FF:000001">
    <property type="entry name" value="50S ribosomal protein L11"/>
    <property type="match status" value="1"/>
</dbReference>
<dbReference type="Gene3D" id="1.10.10.250">
    <property type="entry name" value="Ribosomal protein L11, C-terminal domain"/>
    <property type="match status" value="1"/>
</dbReference>
<dbReference type="Gene3D" id="3.30.1550.10">
    <property type="entry name" value="Ribosomal protein L11/L12, N-terminal domain"/>
    <property type="match status" value="1"/>
</dbReference>
<dbReference type="HAMAP" id="MF_00736">
    <property type="entry name" value="Ribosomal_uL11"/>
    <property type="match status" value="1"/>
</dbReference>
<dbReference type="InterPro" id="IPR000911">
    <property type="entry name" value="Ribosomal_uL11"/>
</dbReference>
<dbReference type="InterPro" id="IPR006519">
    <property type="entry name" value="Ribosomal_uL11_bac-typ"/>
</dbReference>
<dbReference type="InterPro" id="IPR020783">
    <property type="entry name" value="Ribosomal_uL11_C"/>
</dbReference>
<dbReference type="InterPro" id="IPR036769">
    <property type="entry name" value="Ribosomal_uL11_C_sf"/>
</dbReference>
<dbReference type="InterPro" id="IPR020785">
    <property type="entry name" value="Ribosomal_uL11_CS"/>
</dbReference>
<dbReference type="InterPro" id="IPR020784">
    <property type="entry name" value="Ribosomal_uL11_N"/>
</dbReference>
<dbReference type="InterPro" id="IPR036796">
    <property type="entry name" value="Ribosomal_uL11_N_sf"/>
</dbReference>
<dbReference type="NCBIfam" id="TIGR01632">
    <property type="entry name" value="L11_bact"/>
    <property type="match status" value="1"/>
</dbReference>
<dbReference type="PANTHER" id="PTHR11661">
    <property type="entry name" value="60S RIBOSOMAL PROTEIN L12"/>
    <property type="match status" value="1"/>
</dbReference>
<dbReference type="PANTHER" id="PTHR11661:SF1">
    <property type="entry name" value="LARGE RIBOSOMAL SUBUNIT PROTEIN UL11M"/>
    <property type="match status" value="1"/>
</dbReference>
<dbReference type="Pfam" id="PF00298">
    <property type="entry name" value="Ribosomal_L11"/>
    <property type="match status" value="1"/>
</dbReference>
<dbReference type="Pfam" id="PF03946">
    <property type="entry name" value="Ribosomal_L11_N"/>
    <property type="match status" value="1"/>
</dbReference>
<dbReference type="SMART" id="SM00649">
    <property type="entry name" value="RL11"/>
    <property type="match status" value="1"/>
</dbReference>
<dbReference type="SUPFAM" id="SSF54747">
    <property type="entry name" value="Ribosomal L11/L12e N-terminal domain"/>
    <property type="match status" value="1"/>
</dbReference>
<dbReference type="SUPFAM" id="SSF46906">
    <property type="entry name" value="Ribosomal protein L11, C-terminal domain"/>
    <property type="match status" value="1"/>
</dbReference>
<dbReference type="PROSITE" id="PS00359">
    <property type="entry name" value="RIBOSOMAL_L11"/>
    <property type="match status" value="1"/>
</dbReference>